<dbReference type="EC" id="3.5.1.18" evidence="1"/>
<dbReference type="EMBL" id="CP000697">
    <property type="protein sequence ID" value="ABQ30739.1"/>
    <property type="molecule type" value="Genomic_DNA"/>
</dbReference>
<dbReference type="RefSeq" id="WP_011942310.1">
    <property type="nucleotide sequence ID" value="NC_009484.1"/>
</dbReference>
<dbReference type="SMR" id="A5FYQ7"/>
<dbReference type="STRING" id="349163.Acry_1531"/>
<dbReference type="KEGG" id="acr:Acry_1531"/>
<dbReference type="eggNOG" id="COG0624">
    <property type="taxonomic scope" value="Bacteria"/>
</dbReference>
<dbReference type="HOGENOM" id="CLU_021802_4_0_5"/>
<dbReference type="UniPathway" id="UPA00034">
    <property type="reaction ID" value="UER00021"/>
</dbReference>
<dbReference type="Proteomes" id="UP000000245">
    <property type="component" value="Chromosome"/>
</dbReference>
<dbReference type="GO" id="GO:0008777">
    <property type="term" value="F:acetylornithine deacetylase activity"/>
    <property type="evidence" value="ECO:0007669"/>
    <property type="project" value="TreeGrafter"/>
</dbReference>
<dbReference type="GO" id="GO:0050897">
    <property type="term" value="F:cobalt ion binding"/>
    <property type="evidence" value="ECO:0007669"/>
    <property type="project" value="UniProtKB-UniRule"/>
</dbReference>
<dbReference type="GO" id="GO:0009014">
    <property type="term" value="F:succinyl-diaminopimelate desuccinylase activity"/>
    <property type="evidence" value="ECO:0007669"/>
    <property type="project" value="UniProtKB-UniRule"/>
</dbReference>
<dbReference type="GO" id="GO:0008270">
    <property type="term" value="F:zinc ion binding"/>
    <property type="evidence" value="ECO:0007669"/>
    <property type="project" value="UniProtKB-UniRule"/>
</dbReference>
<dbReference type="GO" id="GO:0019877">
    <property type="term" value="P:diaminopimelate biosynthetic process"/>
    <property type="evidence" value="ECO:0007669"/>
    <property type="project" value="UniProtKB-UniRule"/>
</dbReference>
<dbReference type="GO" id="GO:0006526">
    <property type="term" value="P:L-arginine biosynthetic process"/>
    <property type="evidence" value="ECO:0007669"/>
    <property type="project" value="TreeGrafter"/>
</dbReference>
<dbReference type="GO" id="GO:0009089">
    <property type="term" value="P:lysine biosynthetic process via diaminopimelate"/>
    <property type="evidence" value="ECO:0007669"/>
    <property type="project" value="UniProtKB-UniRule"/>
</dbReference>
<dbReference type="CDD" id="cd03891">
    <property type="entry name" value="M20_DapE_proteobac"/>
    <property type="match status" value="1"/>
</dbReference>
<dbReference type="Gene3D" id="3.40.630.10">
    <property type="entry name" value="Zn peptidases"/>
    <property type="match status" value="2"/>
</dbReference>
<dbReference type="HAMAP" id="MF_01690">
    <property type="entry name" value="DapE"/>
    <property type="match status" value="1"/>
</dbReference>
<dbReference type="InterPro" id="IPR001261">
    <property type="entry name" value="ArgE/DapE_CS"/>
</dbReference>
<dbReference type="InterPro" id="IPR036264">
    <property type="entry name" value="Bact_exopeptidase_dim_dom"/>
</dbReference>
<dbReference type="InterPro" id="IPR005941">
    <property type="entry name" value="DapE_proteobac"/>
</dbReference>
<dbReference type="InterPro" id="IPR002933">
    <property type="entry name" value="Peptidase_M20"/>
</dbReference>
<dbReference type="InterPro" id="IPR011650">
    <property type="entry name" value="Peptidase_M20_dimer"/>
</dbReference>
<dbReference type="InterPro" id="IPR050072">
    <property type="entry name" value="Peptidase_M20A"/>
</dbReference>
<dbReference type="NCBIfam" id="TIGR01246">
    <property type="entry name" value="dapE_proteo"/>
    <property type="match status" value="1"/>
</dbReference>
<dbReference type="NCBIfam" id="NF009557">
    <property type="entry name" value="PRK13009.1"/>
    <property type="match status" value="1"/>
</dbReference>
<dbReference type="PANTHER" id="PTHR43808">
    <property type="entry name" value="ACETYLORNITHINE DEACETYLASE"/>
    <property type="match status" value="1"/>
</dbReference>
<dbReference type="PANTHER" id="PTHR43808:SF31">
    <property type="entry name" value="N-ACETYL-L-CITRULLINE DEACETYLASE"/>
    <property type="match status" value="1"/>
</dbReference>
<dbReference type="Pfam" id="PF07687">
    <property type="entry name" value="M20_dimer"/>
    <property type="match status" value="1"/>
</dbReference>
<dbReference type="Pfam" id="PF01546">
    <property type="entry name" value="Peptidase_M20"/>
    <property type="match status" value="1"/>
</dbReference>
<dbReference type="SUPFAM" id="SSF55031">
    <property type="entry name" value="Bacterial exopeptidase dimerisation domain"/>
    <property type="match status" value="1"/>
</dbReference>
<dbReference type="SUPFAM" id="SSF53187">
    <property type="entry name" value="Zn-dependent exopeptidases"/>
    <property type="match status" value="1"/>
</dbReference>
<dbReference type="PROSITE" id="PS00759">
    <property type="entry name" value="ARGE_DAPE_CPG2_2"/>
    <property type="match status" value="1"/>
</dbReference>
<gene>
    <name evidence="1" type="primary">dapE</name>
    <name type="ordered locus">Acry_1531</name>
</gene>
<feature type="chain" id="PRO_0000375437" description="Succinyl-diaminopimelate desuccinylase">
    <location>
        <begin position="1"/>
        <end position="371"/>
    </location>
</feature>
<feature type="active site" evidence="1">
    <location>
        <position position="70"/>
    </location>
</feature>
<feature type="active site" description="Proton acceptor" evidence="1">
    <location>
        <position position="130"/>
    </location>
</feature>
<feature type="binding site" evidence="1">
    <location>
        <position position="68"/>
    </location>
    <ligand>
        <name>Zn(2+)</name>
        <dbReference type="ChEBI" id="CHEBI:29105"/>
        <label>1</label>
    </ligand>
</feature>
<feature type="binding site" evidence="1">
    <location>
        <position position="99"/>
    </location>
    <ligand>
        <name>Zn(2+)</name>
        <dbReference type="ChEBI" id="CHEBI:29105"/>
        <label>1</label>
    </ligand>
</feature>
<feature type="binding site" evidence="1">
    <location>
        <position position="99"/>
    </location>
    <ligand>
        <name>Zn(2+)</name>
        <dbReference type="ChEBI" id="CHEBI:29105"/>
        <label>2</label>
    </ligand>
</feature>
<feature type="binding site" evidence="1">
    <location>
        <position position="131"/>
    </location>
    <ligand>
        <name>Zn(2+)</name>
        <dbReference type="ChEBI" id="CHEBI:29105"/>
        <label>2</label>
    </ligand>
</feature>
<feature type="binding site" evidence="1">
    <location>
        <position position="159"/>
    </location>
    <ligand>
        <name>Zn(2+)</name>
        <dbReference type="ChEBI" id="CHEBI:29105"/>
        <label>1</label>
    </ligand>
</feature>
<feature type="binding site" evidence="1">
    <location>
        <position position="344"/>
    </location>
    <ligand>
        <name>Zn(2+)</name>
        <dbReference type="ChEBI" id="CHEBI:29105"/>
        <label>2</label>
    </ligand>
</feature>
<keyword id="KW-0028">Amino-acid biosynthesis</keyword>
<keyword id="KW-0170">Cobalt</keyword>
<keyword id="KW-0220">Diaminopimelate biosynthesis</keyword>
<keyword id="KW-0378">Hydrolase</keyword>
<keyword id="KW-0457">Lysine biosynthesis</keyword>
<keyword id="KW-0479">Metal-binding</keyword>
<keyword id="KW-1185">Reference proteome</keyword>
<keyword id="KW-0862">Zinc</keyword>
<sequence length="371" mass="39011">MTEADPVPLARDLLRSRSVTPEDDGAQTVLARALDALGFSIEWLRFGEVSNLVARRGSGSPHFGFAGHTDVVPPGEGWRHDPFAAVIEDGLLFGRGAVDMKGAIAAFVAALAARPANHAGTISLLITGDEEGDAVDGTRRILDHLAASGALPEFCLVGEPTCRARLGDTIKIGRRGSISAHVTVRGVQGHVAYPHLADNPLHRLIPALEALRATTLDEGTAWFEPSSLQITSVDTGNKAGNVIPASASARLNIRFNDRHTGPDLAAWIRDTVARHAPGAACDIGISGEAFLTEPGPVTTLFSEAVAAVTGITPKLDTGGGTSDARFIAAHCPVAEFGLVGTSMHRVDEAVPVSELRALAEIYGRILDRVFR</sequence>
<organism>
    <name type="scientific">Acidiphilium cryptum (strain JF-5)</name>
    <dbReference type="NCBI Taxonomy" id="349163"/>
    <lineage>
        <taxon>Bacteria</taxon>
        <taxon>Pseudomonadati</taxon>
        <taxon>Pseudomonadota</taxon>
        <taxon>Alphaproteobacteria</taxon>
        <taxon>Acetobacterales</taxon>
        <taxon>Acidocellaceae</taxon>
        <taxon>Acidiphilium</taxon>
    </lineage>
</organism>
<reference key="1">
    <citation type="submission" date="2007-05" db="EMBL/GenBank/DDBJ databases">
        <title>Complete sequence of chromosome of Acidiphilium cryptum JF-5.</title>
        <authorList>
            <consortium name="US DOE Joint Genome Institute"/>
            <person name="Copeland A."/>
            <person name="Lucas S."/>
            <person name="Lapidus A."/>
            <person name="Barry K."/>
            <person name="Detter J.C."/>
            <person name="Glavina del Rio T."/>
            <person name="Hammon N."/>
            <person name="Israni S."/>
            <person name="Dalin E."/>
            <person name="Tice H."/>
            <person name="Pitluck S."/>
            <person name="Sims D."/>
            <person name="Brettin T."/>
            <person name="Bruce D."/>
            <person name="Han C."/>
            <person name="Schmutz J."/>
            <person name="Larimer F."/>
            <person name="Land M."/>
            <person name="Hauser L."/>
            <person name="Kyrpides N."/>
            <person name="Kim E."/>
            <person name="Magnuson T."/>
            <person name="Richardson P."/>
        </authorList>
    </citation>
    <scope>NUCLEOTIDE SEQUENCE [LARGE SCALE GENOMIC DNA]</scope>
    <source>
        <strain>JF-5</strain>
    </source>
</reference>
<accession>A5FYQ7</accession>
<name>DAPE_ACICJ</name>
<protein>
    <recommendedName>
        <fullName evidence="1">Succinyl-diaminopimelate desuccinylase</fullName>
        <shortName evidence="1">SDAP desuccinylase</shortName>
        <ecNumber evidence="1">3.5.1.18</ecNumber>
    </recommendedName>
    <alternativeName>
        <fullName evidence="1">N-succinyl-LL-2,6-diaminoheptanedioate amidohydrolase</fullName>
    </alternativeName>
</protein>
<comment type="function">
    <text evidence="1">Catalyzes the hydrolysis of N-succinyl-L,L-diaminopimelic acid (SDAP), forming succinate and LL-2,6-diaminopimelate (DAP), an intermediate involved in the bacterial biosynthesis of lysine and meso-diaminopimelic acid, an essential component of bacterial cell walls.</text>
</comment>
<comment type="catalytic activity">
    <reaction evidence="1">
        <text>N-succinyl-(2S,6S)-2,6-diaminopimelate + H2O = (2S,6S)-2,6-diaminopimelate + succinate</text>
        <dbReference type="Rhea" id="RHEA:22608"/>
        <dbReference type="ChEBI" id="CHEBI:15377"/>
        <dbReference type="ChEBI" id="CHEBI:30031"/>
        <dbReference type="ChEBI" id="CHEBI:57609"/>
        <dbReference type="ChEBI" id="CHEBI:58087"/>
        <dbReference type="EC" id="3.5.1.18"/>
    </reaction>
</comment>
<comment type="cofactor">
    <cofactor evidence="1">
        <name>Zn(2+)</name>
        <dbReference type="ChEBI" id="CHEBI:29105"/>
    </cofactor>
    <cofactor evidence="1">
        <name>Co(2+)</name>
        <dbReference type="ChEBI" id="CHEBI:48828"/>
    </cofactor>
    <text evidence="1">Binds 2 Zn(2+) or Co(2+) ions per subunit.</text>
</comment>
<comment type="pathway">
    <text evidence="1">Amino-acid biosynthesis; L-lysine biosynthesis via DAP pathway; LL-2,6-diaminopimelate from (S)-tetrahydrodipicolinate (succinylase route): step 3/3.</text>
</comment>
<comment type="subunit">
    <text evidence="1">Homodimer.</text>
</comment>
<comment type="similarity">
    <text evidence="1">Belongs to the peptidase M20A family. DapE subfamily.</text>
</comment>
<proteinExistence type="inferred from homology"/>
<evidence type="ECO:0000255" key="1">
    <source>
        <dbReference type="HAMAP-Rule" id="MF_01690"/>
    </source>
</evidence>